<gene>
    <name evidence="1" type="primary">hldE</name>
    <name type="ordered locus">EC55989_3466</name>
</gene>
<comment type="function">
    <text evidence="1">Catalyzes the phosphorylation of D-glycero-D-manno-heptose 7-phosphate at the C-1 position to selectively form D-glycero-beta-D-manno-heptose-1,7-bisphosphate.</text>
</comment>
<comment type="function">
    <text evidence="1">Catalyzes the ADP transfer from ATP to D-glycero-beta-D-manno-heptose 1-phosphate, yielding ADP-D-glycero-beta-D-manno-heptose.</text>
</comment>
<comment type="catalytic activity">
    <reaction evidence="1">
        <text>D-glycero-beta-D-manno-heptose 7-phosphate + ATP = D-glycero-beta-D-manno-heptose 1,7-bisphosphate + ADP + H(+)</text>
        <dbReference type="Rhea" id="RHEA:27473"/>
        <dbReference type="ChEBI" id="CHEBI:15378"/>
        <dbReference type="ChEBI" id="CHEBI:30616"/>
        <dbReference type="ChEBI" id="CHEBI:60204"/>
        <dbReference type="ChEBI" id="CHEBI:60208"/>
        <dbReference type="ChEBI" id="CHEBI:456216"/>
        <dbReference type="EC" id="2.7.1.167"/>
    </reaction>
</comment>
<comment type="catalytic activity">
    <reaction evidence="1">
        <text>D-glycero-beta-D-manno-heptose 1-phosphate + ATP + H(+) = ADP-D-glycero-beta-D-manno-heptose + diphosphate</text>
        <dbReference type="Rhea" id="RHEA:27465"/>
        <dbReference type="ChEBI" id="CHEBI:15378"/>
        <dbReference type="ChEBI" id="CHEBI:30616"/>
        <dbReference type="ChEBI" id="CHEBI:33019"/>
        <dbReference type="ChEBI" id="CHEBI:59967"/>
        <dbReference type="ChEBI" id="CHEBI:61593"/>
        <dbReference type="EC" id="2.7.7.70"/>
    </reaction>
</comment>
<comment type="pathway">
    <text evidence="1">Nucleotide-sugar biosynthesis; ADP-L-glycero-beta-D-manno-heptose biosynthesis; ADP-L-glycero-beta-D-manno-heptose from D-glycero-beta-D-manno-heptose 7-phosphate: step 1/4.</text>
</comment>
<comment type="pathway">
    <text evidence="1">Nucleotide-sugar biosynthesis; ADP-L-glycero-beta-D-manno-heptose biosynthesis; ADP-L-glycero-beta-D-manno-heptose from D-glycero-beta-D-manno-heptose 7-phosphate: step 3/4.</text>
</comment>
<comment type="subunit">
    <text evidence="1">Homodimer.</text>
</comment>
<comment type="similarity">
    <text evidence="1">In the N-terminal section; belongs to the carbohydrate kinase PfkB family.</text>
</comment>
<comment type="similarity">
    <text evidence="1">In the C-terminal section; belongs to the cytidylyltransferase family.</text>
</comment>
<protein>
    <recommendedName>
        <fullName evidence="1">Bifunctional protein HldE</fullName>
    </recommendedName>
    <domain>
        <recommendedName>
            <fullName evidence="1">D-beta-D-heptose 7-phosphate kinase</fullName>
            <ecNumber evidence="1">2.7.1.167</ecNumber>
        </recommendedName>
        <alternativeName>
            <fullName evidence="1">D-beta-D-heptose 7-phosphotransferase</fullName>
        </alternativeName>
        <alternativeName>
            <fullName evidence="1">D-glycero-beta-D-manno-heptose-7-phosphate kinase</fullName>
        </alternativeName>
    </domain>
    <domain>
        <recommendedName>
            <fullName evidence="1">D-beta-D-heptose 1-phosphate adenylyltransferase</fullName>
            <ecNumber evidence="1">2.7.7.70</ecNumber>
        </recommendedName>
        <alternativeName>
            <fullName evidence="1">D-glycero-beta-D-manno-heptose 1-phosphate adenylyltransferase</fullName>
        </alternativeName>
    </domain>
</protein>
<feature type="chain" id="PRO_1000185801" description="Bifunctional protein HldE">
    <location>
        <begin position="1"/>
        <end position="477"/>
    </location>
</feature>
<feature type="region of interest" description="Ribokinase">
    <location>
        <begin position="1"/>
        <end position="318"/>
    </location>
</feature>
<feature type="region of interest" description="Cytidylyltransferase">
    <location>
        <begin position="344"/>
        <end position="477"/>
    </location>
</feature>
<feature type="active site" evidence="1">
    <location>
        <position position="264"/>
    </location>
</feature>
<feature type="binding site" evidence="1">
    <location>
        <begin position="195"/>
        <end position="198"/>
    </location>
    <ligand>
        <name>ATP</name>
        <dbReference type="ChEBI" id="CHEBI:30616"/>
    </ligand>
</feature>
<feature type="modified residue" description="N6-acetyllysine" evidence="1">
    <location>
        <position position="179"/>
    </location>
</feature>
<sequence>MKVTLPEFERAGVMVVGDVMLDRYWYGPTSRISPEAPVPVVKVNTIEERPGGAANVAMNIASLGANARLVGLTGIDDAARALSKSLADVNVKCDFVSVPTHPTITKLRVLSRNQQLIRLDFEEGFEGVDPQPLHERINQALSSIGALVLSDYAKGALASVQQMIQLARKAGVPVLIDPKGTDFERYRGATLLTPNLSEFEAVVGKCKTEEEIVERGMKLIADYELSALLVTRSEQGMSLLQPGKAPLHMPTQAQEVYDVTGAGDTVIGVLAATLAAGNSLEEACFFANAAAGVVVGKLGTSTVSPIELENAVRGRADTGFGVMTEEELKLAVAAARKRGEKVVMTNGVFDILHAGHVSYLANARKLGDRLIVAVNSDASTKRLKGDSRPVNPLEQRMIVLGALEAVDWVVSFEEDTPQRLIAGILPDLLVKGGDYKPEEIAGSKEVWANGGEVLVLNFEDGCSTTNIIKKIQQDKKG</sequence>
<accession>B7LGY7</accession>
<name>HLDE_ECO55</name>
<reference key="1">
    <citation type="journal article" date="2009" name="PLoS Genet.">
        <title>Organised genome dynamics in the Escherichia coli species results in highly diverse adaptive paths.</title>
        <authorList>
            <person name="Touchon M."/>
            <person name="Hoede C."/>
            <person name="Tenaillon O."/>
            <person name="Barbe V."/>
            <person name="Baeriswyl S."/>
            <person name="Bidet P."/>
            <person name="Bingen E."/>
            <person name="Bonacorsi S."/>
            <person name="Bouchier C."/>
            <person name="Bouvet O."/>
            <person name="Calteau A."/>
            <person name="Chiapello H."/>
            <person name="Clermont O."/>
            <person name="Cruveiller S."/>
            <person name="Danchin A."/>
            <person name="Diard M."/>
            <person name="Dossat C."/>
            <person name="Karoui M.E."/>
            <person name="Frapy E."/>
            <person name="Garry L."/>
            <person name="Ghigo J.M."/>
            <person name="Gilles A.M."/>
            <person name="Johnson J."/>
            <person name="Le Bouguenec C."/>
            <person name="Lescat M."/>
            <person name="Mangenot S."/>
            <person name="Martinez-Jehanne V."/>
            <person name="Matic I."/>
            <person name="Nassif X."/>
            <person name="Oztas S."/>
            <person name="Petit M.A."/>
            <person name="Pichon C."/>
            <person name="Rouy Z."/>
            <person name="Ruf C.S."/>
            <person name="Schneider D."/>
            <person name="Tourret J."/>
            <person name="Vacherie B."/>
            <person name="Vallenet D."/>
            <person name="Medigue C."/>
            <person name="Rocha E.P.C."/>
            <person name="Denamur E."/>
        </authorList>
    </citation>
    <scope>NUCLEOTIDE SEQUENCE [LARGE SCALE GENOMIC DNA]</scope>
    <source>
        <strain>55989 / EAEC</strain>
    </source>
</reference>
<proteinExistence type="inferred from homology"/>
<keyword id="KW-0007">Acetylation</keyword>
<keyword id="KW-0067">ATP-binding</keyword>
<keyword id="KW-0119">Carbohydrate metabolism</keyword>
<keyword id="KW-0418">Kinase</keyword>
<keyword id="KW-0511">Multifunctional enzyme</keyword>
<keyword id="KW-0547">Nucleotide-binding</keyword>
<keyword id="KW-0548">Nucleotidyltransferase</keyword>
<keyword id="KW-1185">Reference proteome</keyword>
<keyword id="KW-0808">Transferase</keyword>
<organism>
    <name type="scientific">Escherichia coli (strain 55989 / EAEC)</name>
    <dbReference type="NCBI Taxonomy" id="585055"/>
    <lineage>
        <taxon>Bacteria</taxon>
        <taxon>Pseudomonadati</taxon>
        <taxon>Pseudomonadota</taxon>
        <taxon>Gammaproteobacteria</taxon>
        <taxon>Enterobacterales</taxon>
        <taxon>Enterobacteriaceae</taxon>
        <taxon>Escherichia</taxon>
    </lineage>
</organism>
<evidence type="ECO:0000255" key="1">
    <source>
        <dbReference type="HAMAP-Rule" id="MF_01603"/>
    </source>
</evidence>
<dbReference type="EC" id="2.7.1.167" evidence="1"/>
<dbReference type="EC" id="2.7.7.70" evidence="1"/>
<dbReference type="EMBL" id="CU928145">
    <property type="protein sequence ID" value="CAU99599.1"/>
    <property type="molecule type" value="Genomic_DNA"/>
</dbReference>
<dbReference type="RefSeq" id="WP_000869178.1">
    <property type="nucleotide sequence ID" value="NC_011748.1"/>
</dbReference>
<dbReference type="SMR" id="B7LGY7"/>
<dbReference type="GeneID" id="75205361"/>
<dbReference type="KEGG" id="eck:EC55989_3466"/>
<dbReference type="HOGENOM" id="CLU_021150_2_1_6"/>
<dbReference type="UniPathway" id="UPA00356">
    <property type="reaction ID" value="UER00437"/>
</dbReference>
<dbReference type="UniPathway" id="UPA00356">
    <property type="reaction ID" value="UER00439"/>
</dbReference>
<dbReference type="Proteomes" id="UP000000746">
    <property type="component" value="Chromosome"/>
</dbReference>
<dbReference type="GO" id="GO:0005829">
    <property type="term" value="C:cytosol"/>
    <property type="evidence" value="ECO:0007669"/>
    <property type="project" value="TreeGrafter"/>
</dbReference>
<dbReference type="GO" id="GO:0005524">
    <property type="term" value="F:ATP binding"/>
    <property type="evidence" value="ECO:0007669"/>
    <property type="project" value="UniProtKB-UniRule"/>
</dbReference>
<dbReference type="GO" id="GO:0033785">
    <property type="term" value="F:heptose 7-phosphate kinase activity"/>
    <property type="evidence" value="ECO:0007669"/>
    <property type="project" value="UniProtKB-UniRule"/>
</dbReference>
<dbReference type="GO" id="GO:0033786">
    <property type="term" value="F:heptose-1-phosphate adenylyltransferase activity"/>
    <property type="evidence" value="ECO:0007669"/>
    <property type="project" value="UniProtKB-UniRule"/>
</dbReference>
<dbReference type="GO" id="GO:0016773">
    <property type="term" value="F:phosphotransferase activity, alcohol group as acceptor"/>
    <property type="evidence" value="ECO:0007669"/>
    <property type="project" value="InterPro"/>
</dbReference>
<dbReference type="GO" id="GO:0097171">
    <property type="term" value="P:ADP-L-glycero-beta-D-manno-heptose biosynthetic process"/>
    <property type="evidence" value="ECO:0007669"/>
    <property type="project" value="UniProtKB-UniPathway"/>
</dbReference>
<dbReference type="CDD" id="cd01172">
    <property type="entry name" value="RfaE_like"/>
    <property type="match status" value="1"/>
</dbReference>
<dbReference type="FunFam" id="3.40.1190.20:FF:000002">
    <property type="entry name" value="Bifunctional protein HldE"/>
    <property type="match status" value="1"/>
</dbReference>
<dbReference type="FunFam" id="3.40.50.620:FF:000028">
    <property type="entry name" value="Bifunctional protein HldE"/>
    <property type="match status" value="1"/>
</dbReference>
<dbReference type="Gene3D" id="3.40.1190.20">
    <property type="match status" value="1"/>
</dbReference>
<dbReference type="Gene3D" id="3.40.50.620">
    <property type="entry name" value="HUPs"/>
    <property type="match status" value="1"/>
</dbReference>
<dbReference type="HAMAP" id="MF_01603">
    <property type="entry name" value="HldE"/>
    <property type="match status" value="1"/>
</dbReference>
<dbReference type="InterPro" id="IPR023030">
    <property type="entry name" value="Bifunc_HldE"/>
</dbReference>
<dbReference type="InterPro" id="IPR002173">
    <property type="entry name" value="Carboh/pur_kinase_PfkB_CS"/>
</dbReference>
<dbReference type="InterPro" id="IPR004821">
    <property type="entry name" value="Cyt_trans-like"/>
</dbReference>
<dbReference type="InterPro" id="IPR011611">
    <property type="entry name" value="PfkB_dom"/>
</dbReference>
<dbReference type="InterPro" id="IPR011913">
    <property type="entry name" value="RfaE_dom_I"/>
</dbReference>
<dbReference type="InterPro" id="IPR011914">
    <property type="entry name" value="RfaE_dom_II"/>
</dbReference>
<dbReference type="InterPro" id="IPR029056">
    <property type="entry name" value="Ribokinase-like"/>
</dbReference>
<dbReference type="InterPro" id="IPR014729">
    <property type="entry name" value="Rossmann-like_a/b/a_fold"/>
</dbReference>
<dbReference type="NCBIfam" id="TIGR00125">
    <property type="entry name" value="cyt_tran_rel"/>
    <property type="match status" value="1"/>
</dbReference>
<dbReference type="NCBIfam" id="NF008454">
    <property type="entry name" value="PRK11316.1"/>
    <property type="match status" value="1"/>
</dbReference>
<dbReference type="NCBIfam" id="TIGR02198">
    <property type="entry name" value="rfaE_dom_I"/>
    <property type="match status" value="1"/>
</dbReference>
<dbReference type="NCBIfam" id="TIGR02199">
    <property type="entry name" value="rfaE_dom_II"/>
    <property type="match status" value="1"/>
</dbReference>
<dbReference type="PANTHER" id="PTHR46969">
    <property type="entry name" value="BIFUNCTIONAL PROTEIN HLDE"/>
    <property type="match status" value="1"/>
</dbReference>
<dbReference type="PANTHER" id="PTHR46969:SF1">
    <property type="entry name" value="BIFUNCTIONAL PROTEIN HLDE"/>
    <property type="match status" value="1"/>
</dbReference>
<dbReference type="Pfam" id="PF01467">
    <property type="entry name" value="CTP_transf_like"/>
    <property type="match status" value="1"/>
</dbReference>
<dbReference type="Pfam" id="PF00294">
    <property type="entry name" value="PfkB"/>
    <property type="match status" value="1"/>
</dbReference>
<dbReference type="SUPFAM" id="SSF52374">
    <property type="entry name" value="Nucleotidylyl transferase"/>
    <property type="match status" value="1"/>
</dbReference>
<dbReference type="SUPFAM" id="SSF53613">
    <property type="entry name" value="Ribokinase-like"/>
    <property type="match status" value="1"/>
</dbReference>
<dbReference type="PROSITE" id="PS00583">
    <property type="entry name" value="PFKB_KINASES_1"/>
    <property type="match status" value="1"/>
</dbReference>